<gene>
    <name evidence="1" type="primary">mnmA</name>
    <name type="synonym">trmU</name>
    <name type="ordered locus">PSPPH_3102</name>
</gene>
<comment type="function">
    <text evidence="1">Catalyzes the 2-thiolation of uridine at the wobble position (U34) of tRNA, leading to the formation of s(2)U34.</text>
</comment>
<comment type="catalytic activity">
    <reaction evidence="1">
        <text>S-sulfanyl-L-cysteinyl-[protein] + uridine(34) in tRNA + AH2 + ATP = 2-thiouridine(34) in tRNA + L-cysteinyl-[protein] + A + AMP + diphosphate + H(+)</text>
        <dbReference type="Rhea" id="RHEA:47032"/>
        <dbReference type="Rhea" id="RHEA-COMP:10131"/>
        <dbReference type="Rhea" id="RHEA-COMP:11726"/>
        <dbReference type="Rhea" id="RHEA-COMP:11727"/>
        <dbReference type="Rhea" id="RHEA-COMP:11728"/>
        <dbReference type="ChEBI" id="CHEBI:13193"/>
        <dbReference type="ChEBI" id="CHEBI:15378"/>
        <dbReference type="ChEBI" id="CHEBI:17499"/>
        <dbReference type="ChEBI" id="CHEBI:29950"/>
        <dbReference type="ChEBI" id="CHEBI:30616"/>
        <dbReference type="ChEBI" id="CHEBI:33019"/>
        <dbReference type="ChEBI" id="CHEBI:61963"/>
        <dbReference type="ChEBI" id="CHEBI:65315"/>
        <dbReference type="ChEBI" id="CHEBI:87170"/>
        <dbReference type="ChEBI" id="CHEBI:456215"/>
        <dbReference type="EC" id="2.8.1.13"/>
    </reaction>
</comment>
<comment type="subcellular location">
    <subcellularLocation>
        <location evidence="1">Cytoplasm</location>
    </subcellularLocation>
</comment>
<comment type="similarity">
    <text evidence="1">Belongs to the MnmA/TRMU family.</text>
</comment>
<name>MNMA_PSE14</name>
<keyword id="KW-0067">ATP-binding</keyword>
<keyword id="KW-0963">Cytoplasm</keyword>
<keyword id="KW-1015">Disulfide bond</keyword>
<keyword id="KW-0547">Nucleotide-binding</keyword>
<keyword id="KW-0694">RNA-binding</keyword>
<keyword id="KW-0808">Transferase</keyword>
<keyword id="KW-0819">tRNA processing</keyword>
<keyword id="KW-0820">tRNA-binding</keyword>
<organism>
    <name type="scientific">Pseudomonas savastanoi pv. phaseolicola (strain 1448A / Race 6)</name>
    <name type="common">Pseudomonas syringae pv. phaseolicola (strain 1448A / Race 6)</name>
    <dbReference type="NCBI Taxonomy" id="264730"/>
    <lineage>
        <taxon>Bacteria</taxon>
        <taxon>Pseudomonadati</taxon>
        <taxon>Pseudomonadota</taxon>
        <taxon>Gammaproteobacteria</taxon>
        <taxon>Pseudomonadales</taxon>
        <taxon>Pseudomonadaceae</taxon>
        <taxon>Pseudomonas</taxon>
    </lineage>
</organism>
<evidence type="ECO:0000255" key="1">
    <source>
        <dbReference type="HAMAP-Rule" id="MF_00144"/>
    </source>
</evidence>
<feature type="chain" id="PRO_1000009552" description="tRNA-specific 2-thiouridylase MnmA">
    <location>
        <begin position="1"/>
        <end position="376"/>
    </location>
</feature>
<feature type="region of interest" description="Interaction with target base in tRNA" evidence="1">
    <location>
        <begin position="103"/>
        <end position="105"/>
    </location>
</feature>
<feature type="region of interest" description="Interaction with tRNA" evidence="1">
    <location>
        <begin position="154"/>
        <end position="156"/>
    </location>
</feature>
<feature type="region of interest" description="Interaction with tRNA" evidence="1">
    <location>
        <begin position="316"/>
        <end position="317"/>
    </location>
</feature>
<feature type="active site" description="Nucleophile" evidence="1">
    <location>
        <position position="108"/>
    </location>
</feature>
<feature type="active site" description="Cysteine persulfide intermediate" evidence="1">
    <location>
        <position position="204"/>
    </location>
</feature>
<feature type="binding site" evidence="1">
    <location>
        <begin position="17"/>
        <end position="24"/>
    </location>
    <ligand>
        <name>ATP</name>
        <dbReference type="ChEBI" id="CHEBI:30616"/>
    </ligand>
</feature>
<feature type="binding site" evidence="1">
    <location>
        <position position="43"/>
    </location>
    <ligand>
        <name>ATP</name>
        <dbReference type="ChEBI" id="CHEBI:30616"/>
    </ligand>
</feature>
<feature type="binding site" evidence="1">
    <location>
        <position position="132"/>
    </location>
    <ligand>
        <name>ATP</name>
        <dbReference type="ChEBI" id="CHEBI:30616"/>
    </ligand>
</feature>
<feature type="site" description="Interaction with tRNA" evidence="1">
    <location>
        <position position="133"/>
    </location>
</feature>
<feature type="site" description="Interaction with tRNA" evidence="1">
    <location>
        <position position="348"/>
    </location>
</feature>
<feature type="disulfide bond" description="Alternate" evidence="1">
    <location>
        <begin position="108"/>
        <end position="204"/>
    </location>
</feature>
<protein>
    <recommendedName>
        <fullName evidence="1">tRNA-specific 2-thiouridylase MnmA</fullName>
        <ecNumber evidence="1">2.8.1.13</ecNumber>
    </recommendedName>
</protein>
<accession>Q48H61</accession>
<proteinExistence type="inferred from homology"/>
<dbReference type="EC" id="2.8.1.13" evidence="1"/>
<dbReference type="EMBL" id="CP000058">
    <property type="protein sequence ID" value="AAZ35606.1"/>
    <property type="molecule type" value="Genomic_DNA"/>
</dbReference>
<dbReference type="RefSeq" id="WP_011168961.1">
    <property type="nucleotide sequence ID" value="NC_005773.3"/>
</dbReference>
<dbReference type="SMR" id="Q48H61"/>
<dbReference type="KEGG" id="psp:PSPPH_3102"/>
<dbReference type="eggNOG" id="COG0482">
    <property type="taxonomic scope" value="Bacteria"/>
</dbReference>
<dbReference type="HOGENOM" id="CLU_035188_1_0_6"/>
<dbReference type="Proteomes" id="UP000000551">
    <property type="component" value="Chromosome"/>
</dbReference>
<dbReference type="GO" id="GO:0005737">
    <property type="term" value="C:cytoplasm"/>
    <property type="evidence" value="ECO:0007669"/>
    <property type="project" value="UniProtKB-SubCell"/>
</dbReference>
<dbReference type="GO" id="GO:0005524">
    <property type="term" value="F:ATP binding"/>
    <property type="evidence" value="ECO:0007669"/>
    <property type="project" value="UniProtKB-KW"/>
</dbReference>
<dbReference type="GO" id="GO:0000049">
    <property type="term" value="F:tRNA binding"/>
    <property type="evidence" value="ECO:0007669"/>
    <property type="project" value="UniProtKB-KW"/>
</dbReference>
<dbReference type="GO" id="GO:0103016">
    <property type="term" value="F:tRNA-uridine 2-sulfurtransferase activity"/>
    <property type="evidence" value="ECO:0007669"/>
    <property type="project" value="UniProtKB-EC"/>
</dbReference>
<dbReference type="GO" id="GO:0002143">
    <property type="term" value="P:tRNA wobble position uridine thiolation"/>
    <property type="evidence" value="ECO:0007669"/>
    <property type="project" value="TreeGrafter"/>
</dbReference>
<dbReference type="CDD" id="cd01998">
    <property type="entry name" value="MnmA_TRMU-like"/>
    <property type="match status" value="1"/>
</dbReference>
<dbReference type="FunFam" id="2.30.30.280:FF:000001">
    <property type="entry name" value="tRNA-specific 2-thiouridylase MnmA"/>
    <property type="match status" value="1"/>
</dbReference>
<dbReference type="FunFam" id="2.40.30.10:FF:000023">
    <property type="entry name" value="tRNA-specific 2-thiouridylase MnmA"/>
    <property type="match status" value="1"/>
</dbReference>
<dbReference type="FunFam" id="3.40.50.620:FF:000004">
    <property type="entry name" value="tRNA-specific 2-thiouridylase MnmA"/>
    <property type="match status" value="1"/>
</dbReference>
<dbReference type="Gene3D" id="2.30.30.280">
    <property type="entry name" value="Adenine nucleotide alpha hydrolases-like domains"/>
    <property type="match status" value="1"/>
</dbReference>
<dbReference type="Gene3D" id="3.40.50.620">
    <property type="entry name" value="HUPs"/>
    <property type="match status" value="1"/>
</dbReference>
<dbReference type="Gene3D" id="2.40.30.10">
    <property type="entry name" value="Translation factors"/>
    <property type="match status" value="1"/>
</dbReference>
<dbReference type="HAMAP" id="MF_00144">
    <property type="entry name" value="tRNA_thiouridyl_MnmA"/>
    <property type="match status" value="1"/>
</dbReference>
<dbReference type="InterPro" id="IPR004506">
    <property type="entry name" value="MnmA-like"/>
</dbReference>
<dbReference type="InterPro" id="IPR046885">
    <property type="entry name" value="MnmA-like_C"/>
</dbReference>
<dbReference type="InterPro" id="IPR046884">
    <property type="entry name" value="MnmA-like_central"/>
</dbReference>
<dbReference type="InterPro" id="IPR023382">
    <property type="entry name" value="MnmA-like_central_sf"/>
</dbReference>
<dbReference type="InterPro" id="IPR014729">
    <property type="entry name" value="Rossmann-like_a/b/a_fold"/>
</dbReference>
<dbReference type="NCBIfam" id="NF001138">
    <property type="entry name" value="PRK00143.1"/>
    <property type="match status" value="1"/>
</dbReference>
<dbReference type="NCBIfam" id="TIGR00420">
    <property type="entry name" value="trmU"/>
    <property type="match status" value="1"/>
</dbReference>
<dbReference type="PANTHER" id="PTHR11933:SF5">
    <property type="entry name" value="MITOCHONDRIAL TRNA-SPECIFIC 2-THIOURIDYLASE 1"/>
    <property type="match status" value="1"/>
</dbReference>
<dbReference type="PANTHER" id="PTHR11933">
    <property type="entry name" value="TRNA 5-METHYLAMINOMETHYL-2-THIOURIDYLATE -METHYLTRANSFERASE"/>
    <property type="match status" value="1"/>
</dbReference>
<dbReference type="Pfam" id="PF03054">
    <property type="entry name" value="tRNA_Me_trans"/>
    <property type="match status" value="1"/>
</dbReference>
<dbReference type="Pfam" id="PF20258">
    <property type="entry name" value="tRNA_Me_trans_C"/>
    <property type="match status" value="1"/>
</dbReference>
<dbReference type="Pfam" id="PF20259">
    <property type="entry name" value="tRNA_Me_trans_M"/>
    <property type="match status" value="1"/>
</dbReference>
<dbReference type="SUPFAM" id="SSF52402">
    <property type="entry name" value="Adenine nucleotide alpha hydrolases-like"/>
    <property type="match status" value="1"/>
</dbReference>
<sequence>MRDPAPSNSEMKRVIVGMSGGVDSSVSAVLLMEQGYQVEGLFMKNWEEDDGTEYCTAREDLADAQAVCDKIGIKLHTANFAAEYWDNVFEHFLEEYKAGRTPNPDILCNREIKFKAFLDYALMLGADLIATGHYVRRRDIDGRTELLKGLDPNKDQSYFLHAVGGEQIARTLFPVGELEKPEVRAIAEKHGLATAKKKDSTGICFIGERRFTDFLRQYLPAQPGEIKTTEGEVIGRHSGLMYHTIGQRQGLGIGGLKDASDDPWYVLVKDLDNNELIVGQGNDHPWLFSRALVSSEIYWVNPIDLSSPRKLTAKVRYRQGDQPCTLEKTADGYRATFDDPQRAVTPGQSVVFYDGEICLGGGVIEIAEPWTSKDKR</sequence>
<reference key="1">
    <citation type="journal article" date="2005" name="J. Bacteriol.">
        <title>Whole-genome sequence analysis of Pseudomonas syringae pv. phaseolicola 1448A reveals divergence among pathovars in genes involved in virulence and transposition.</title>
        <authorList>
            <person name="Joardar V."/>
            <person name="Lindeberg M."/>
            <person name="Jackson R.W."/>
            <person name="Selengut J."/>
            <person name="Dodson R."/>
            <person name="Brinkac L.M."/>
            <person name="Daugherty S.C."/>
            <person name="DeBoy R.T."/>
            <person name="Durkin A.S."/>
            <person name="Gwinn Giglio M."/>
            <person name="Madupu R."/>
            <person name="Nelson W.C."/>
            <person name="Rosovitz M.J."/>
            <person name="Sullivan S.A."/>
            <person name="Crabtree J."/>
            <person name="Creasy T."/>
            <person name="Davidsen T.M."/>
            <person name="Haft D.H."/>
            <person name="Zafar N."/>
            <person name="Zhou L."/>
            <person name="Halpin R."/>
            <person name="Holley T."/>
            <person name="Khouri H.M."/>
            <person name="Feldblyum T.V."/>
            <person name="White O."/>
            <person name="Fraser C.M."/>
            <person name="Chatterjee A.K."/>
            <person name="Cartinhour S."/>
            <person name="Schneider D."/>
            <person name="Mansfield J.W."/>
            <person name="Collmer A."/>
            <person name="Buell R."/>
        </authorList>
    </citation>
    <scope>NUCLEOTIDE SEQUENCE [LARGE SCALE GENOMIC DNA]</scope>
    <source>
        <strain>1448A / Race 6</strain>
    </source>
</reference>